<accession>Q5F8V5</accession>
<proteinExistence type="inferred from homology"/>
<keyword id="KW-0963">Cytoplasm</keyword>
<keyword id="KW-0269">Exonuclease</keyword>
<keyword id="KW-0378">Hydrolase</keyword>
<keyword id="KW-0540">Nuclease</keyword>
<keyword id="KW-1185">Reference proteome</keyword>
<feature type="chain" id="PRO_0000273671" description="Exodeoxyribonuclease 7 large subunit">
    <location>
        <begin position="1"/>
        <end position="451"/>
    </location>
</feature>
<gene>
    <name evidence="1" type="primary">xseA</name>
    <name type="ordered locus">NGO_0655</name>
</gene>
<name>EX7L_NEIG1</name>
<sequence length="451" mass="49798">MSDFFHSDVLSVSELNAFAKSILENHLAGLWIAGEVSNLTRAASGHYYFSLKDSRAQVRCAMFKGAAARLAQPLKEGDHIEVAGKISIYEARGEFQITVNEVRLKGLGQLYEAYERLKAQLQAEGAFAAERKKPLPVRPQCIGIVTSLAAAALRDVVTTLKRRAPEIPVIVYPAAVQGAGSGFQIAQAIKTASQRAECDVLIVCRGGGSIEDLRAFNEEPVVRAIEACTIPVVSGVGHETDFTLADFVADVRAPTPTGAAELVSPNRQESLHRLVQAQGRLKTVLEQRYFDASQKLDWLARQIRHPRQKLDEQRASIGKLAQTLSYSMTQNLRAHTARFERQTQALQHCRPDVSVYRQDIVRLQTALPAAFSRLLARRRQSLTAQAALLEAVSPQHILERGFSVVKNTRGQVIRNADVLKQGQKLHITFSDGETDVRVSKEQGQQDLFDCI</sequence>
<organism>
    <name type="scientific">Neisseria gonorrhoeae (strain ATCC 700825 / FA 1090)</name>
    <dbReference type="NCBI Taxonomy" id="242231"/>
    <lineage>
        <taxon>Bacteria</taxon>
        <taxon>Pseudomonadati</taxon>
        <taxon>Pseudomonadota</taxon>
        <taxon>Betaproteobacteria</taxon>
        <taxon>Neisseriales</taxon>
        <taxon>Neisseriaceae</taxon>
        <taxon>Neisseria</taxon>
    </lineage>
</organism>
<reference key="1">
    <citation type="submission" date="2003-03" db="EMBL/GenBank/DDBJ databases">
        <title>The complete genome sequence of Neisseria gonorrhoeae.</title>
        <authorList>
            <person name="Lewis L.A."/>
            <person name="Gillaspy A.F."/>
            <person name="McLaughlin R.E."/>
            <person name="Gipson M."/>
            <person name="Ducey T.F."/>
            <person name="Ownbey T."/>
            <person name="Hartman K."/>
            <person name="Nydick C."/>
            <person name="Carson M.B."/>
            <person name="Vaughn J."/>
            <person name="Thomson C."/>
            <person name="Song L."/>
            <person name="Lin S."/>
            <person name="Yuan X."/>
            <person name="Najar F."/>
            <person name="Zhan M."/>
            <person name="Ren Q."/>
            <person name="Zhu H."/>
            <person name="Qi S."/>
            <person name="Kenton S.M."/>
            <person name="Lai H."/>
            <person name="White J.D."/>
            <person name="Clifton S."/>
            <person name="Roe B.A."/>
            <person name="Dyer D.W."/>
        </authorList>
    </citation>
    <scope>NUCLEOTIDE SEQUENCE [LARGE SCALE GENOMIC DNA]</scope>
    <source>
        <strain>ATCC 700825 / FA 1090</strain>
    </source>
</reference>
<dbReference type="EC" id="3.1.11.6" evidence="1"/>
<dbReference type="EMBL" id="AE004969">
    <property type="protein sequence ID" value="AAW89382.1"/>
    <property type="molecule type" value="Genomic_DNA"/>
</dbReference>
<dbReference type="RefSeq" id="WP_003688847.1">
    <property type="nucleotide sequence ID" value="NC_002946.2"/>
</dbReference>
<dbReference type="RefSeq" id="YP_207794.1">
    <property type="nucleotide sequence ID" value="NC_002946.2"/>
</dbReference>
<dbReference type="SMR" id="Q5F8V5"/>
<dbReference type="STRING" id="242231.NGO_0655"/>
<dbReference type="GeneID" id="66752994"/>
<dbReference type="KEGG" id="ngo:NGO_0655"/>
<dbReference type="PATRIC" id="fig|242231.10.peg.772"/>
<dbReference type="HOGENOM" id="CLU_023625_3_1_4"/>
<dbReference type="Proteomes" id="UP000000535">
    <property type="component" value="Chromosome"/>
</dbReference>
<dbReference type="GO" id="GO:0005737">
    <property type="term" value="C:cytoplasm"/>
    <property type="evidence" value="ECO:0007669"/>
    <property type="project" value="UniProtKB-SubCell"/>
</dbReference>
<dbReference type="GO" id="GO:0009318">
    <property type="term" value="C:exodeoxyribonuclease VII complex"/>
    <property type="evidence" value="ECO:0007669"/>
    <property type="project" value="InterPro"/>
</dbReference>
<dbReference type="GO" id="GO:0008855">
    <property type="term" value="F:exodeoxyribonuclease VII activity"/>
    <property type="evidence" value="ECO:0007669"/>
    <property type="project" value="UniProtKB-UniRule"/>
</dbReference>
<dbReference type="GO" id="GO:0003676">
    <property type="term" value="F:nucleic acid binding"/>
    <property type="evidence" value="ECO:0007669"/>
    <property type="project" value="InterPro"/>
</dbReference>
<dbReference type="GO" id="GO:0006308">
    <property type="term" value="P:DNA catabolic process"/>
    <property type="evidence" value="ECO:0007669"/>
    <property type="project" value="UniProtKB-UniRule"/>
</dbReference>
<dbReference type="CDD" id="cd04489">
    <property type="entry name" value="ExoVII_LU_OBF"/>
    <property type="match status" value="1"/>
</dbReference>
<dbReference type="Gene3D" id="2.40.50.1010">
    <property type="match status" value="1"/>
</dbReference>
<dbReference type="HAMAP" id="MF_00378">
    <property type="entry name" value="Exonuc_7_L"/>
    <property type="match status" value="1"/>
</dbReference>
<dbReference type="InterPro" id="IPR003753">
    <property type="entry name" value="Exonuc_VII_L"/>
</dbReference>
<dbReference type="InterPro" id="IPR020579">
    <property type="entry name" value="Exonuc_VII_lsu_C"/>
</dbReference>
<dbReference type="InterPro" id="IPR025824">
    <property type="entry name" value="OB-fold_nuc-bd_dom"/>
</dbReference>
<dbReference type="NCBIfam" id="TIGR00237">
    <property type="entry name" value="xseA"/>
    <property type="match status" value="1"/>
</dbReference>
<dbReference type="PANTHER" id="PTHR30008">
    <property type="entry name" value="EXODEOXYRIBONUCLEASE 7 LARGE SUBUNIT"/>
    <property type="match status" value="1"/>
</dbReference>
<dbReference type="PANTHER" id="PTHR30008:SF0">
    <property type="entry name" value="EXODEOXYRIBONUCLEASE 7 LARGE SUBUNIT"/>
    <property type="match status" value="1"/>
</dbReference>
<dbReference type="Pfam" id="PF02601">
    <property type="entry name" value="Exonuc_VII_L"/>
    <property type="match status" value="1"/>
</dbReference>
<dbReference type="Pfam" id="PF13742">
    <property type="entry name" value="tRNA_anti_2"/>
    <property type="match status" value="1"/>
</dbReference>
<protein>
    <recommendedName>
        <fullName evidence="1">Exodeoxyribonuclease 7 large subunit</fullName>
        <ecNumber evidence="1">3.1.11.6</ecNumber>
    </recommendedName>
    <alternativeName>
        <fullName evidence="1">Exodeoxyribonuclease VII large subunit</fullName>
        <shortName evidence="1">Exonuclease VII large subunit</shortName>
    </alternativeName>
</protein>
<comment type="function">
    <text evidence="1">Bidirectionally degrades single-stranded DNA into large acid-insoluble oligonucleotides, which are then degraded further into small acid-soluble oligonucleotides.</text>
</comment>
<comment type="catalytic activity">
    <reaction evidence="1">
        <text>Exonucleolytic cleavage in either 5'- to 3'- or 3'- to 5'-direction to yield nucleoside 5'-phosphates.</text>
        <dbReference type="EC" id="3.1.11.6"/>
    </reaction>
</comment>
<comment type="subunit">
    <text evidence="1">Heterooligomer composed of large and small subunits.</text>
</comment>
<comment type="subcellular location">
    <subcellularLocation>
        <location evidence="1">Cytoplasm</location>
    </subcellularLocation>
</comment>
<comment type="similarity">
    <text evidence="1">Belongs to the XseA family.</text>
</comment>
<evidence type="ECO:0000255" key="1">
    <source>
        <dbReference type="HAMAP-Rule" id="MF_00378"/>
    </source>
</evidence>